<gene>
    <name type="ordered locus">Rv1824</name>
    <name type="ORF">MTCY1A11.19c</name>
</gene>
<evidence type="ECO:0000255" key="1"/>
<evidence type="ECO:0000305" key="2"/>
<feature type="chain" id="PRO_0000103900" description="Uncharacterized protein Rv1824">
    <location>
        <begin position="1"/>
        <end position="121"/>
    </location>
</feature>
<feature type="transmembrane region" description="Helical" evidence="1">
    <location>
        <begin position="12"/>
        <end position="32"/>
    </location>
</feature>
<feature type="transmembrane region" description="Helical" evidence="1">
    <location>
        <begin position="35"/>
        <end position="55"/>
    </location>
</feature>
<feature type="transmembrane region" description="Helical" evidence="1">
    <location>
        <begin position="67"/>
        <end position="87"/>
    </location>
</feature>
<keyword id="KW-1003">Cell membrane</keyword>
<keyword id="KW-0472">Membrane</keyword>
<keyword id="KW-1185">Reference proteome</keyword>
<keyword id="KW-0812">Transmembrane</keyword>
<keyword id="KW-1133">Transmembrane helix</keyword>
<proteinExistence type="inferred from homology"/>
<organism>
    <name type="scientific">Mycobacterium tuberculosis (strain ATCC 25618 / H37Rv)</name>
    <dbReference type="NCBI Taxonomy" id="83332"/>
    <lineage>
        <taxon>Bacteria</taxon>
        <taxon>Bacillati</taxon>
        <taxon>Actinomycetota</taxon>
        <taxon>Actinomycetes</taxon>
        <taxon>Mycobacteriales</taxon>
        <taxon>Mycobacteriaceae</taxon>
        <taxon>Mycobacterium</taxon>
        <taxon>Mycobacterium tuberculosis complex</taxon>
    </lineage>
</organism>
<dbReference type="EMBL" id="AL123456">
    <property type="protein sequence ID" value="CCP44590.1"/>
    <property type="molecule type" value="Genomic_DNA"/>
</dbReference>
<dbReference type="PIR" id="A70721">
    <property type="entry name" value="A70721"/>
</dbReference>
<dbReference type="RefSeq" id="NP_216340.1">
    <property type="nucleotide sequence ID" value="NC_000962.3"/>
</dbReference>
<dbReference type="RefSeq" id="WP_003899037.1">
    <property type="nucleotide sequence ID" value="NZ_NVQJ01000013.1"/>
</dbReference>
<dbReference type="FunCoup" id="P9WLR7">
    <property type="interactions" value="4"/>
</dbReference>
<dbReference type="STRING" id="83332.Rv1824"/>
<dbReference type="PaxDb" id="83332-Rv1824"/>
<dbReference type="DNASU" id="885719"/>
<dbReference type="GeneID" id="885719"/>
<dbReference type="KEGG" id="mtu:Rv1824"/>
<dbReference type="KEGG" id="mtv:RVBD_1824"/>
<dbReference type="PATRIC" id="fig|83332.111.peg.2030"/>
<dbReference type="TubercuList" id="Rv1824"/>
<dbReference type="eggNOG" id="COG3856">
    <property type="taxonomic scope" value="Bacteria"/>
</dbReference>
<dbReference type="InParanoid" id="P9WLR7"/>
<dbReference type="OrthoDB" id="9812056at2"/>
<dbReference type="PhylomeDB" id="P9WLR7"/>
<dbReference type="Proteomes" id="UP000001584">
    <property type="component" value="Chromosome"/>
</dbReference>
<dbReference type="GO" id="GO:0005886">
    <property type="term" value="C:plasma membrane"/>
    <property type="evidence" value="ECO:0007669"/>
    <property type="project" value="UniProtKB-SubCell"/>
</dbReference>
<dbReference type="InterPro" id="IPR009709">
    <property type="entry name" value="DUF1290"/>
</dbReference>
<dbReference type="Pfam" id="PF06947">
    <property type="entry name" value="DUF1290"/>
    <property type="match status" value="1"/>
</dbReference>
<dbReference type="PIRSF" id="PIRSF018579">
    <property type="entry name" value="Sbp"/>
    <property type="match status" value="1"/>
</dbReference>
<sequence length="121" mass="12750">MGSDTAWSPARMIGIAALAVGIVLGLVFHPGVPEVIQPYLPIAVVAALDAVFGGLRAYLERIFDPKVFVVSFVFNVLVAALIVYVGDQLGVGTQLSTAIIVVLGIRIFGNTAALRRRLFGA</sequence>
<name>Y1824_MYCTU</name>
<comment type="subcellular location">
    <subcellularLocation>
        <location evidence="2">Cell membrane</location>
        <topology evidence="2">Multi-pass membrane protein</topology>
    </subcellularLocation>
</comment>
<comment type="similarity">
    <text evidence="2">Belongs to the sbp family.</text>
</comment>
<protein>
    <recommendedName>
        <fullName>Uncharacterized protein Rv1824</fullName>
    </recommendedName>
</protein>
<accession>P9WLR7</accession>
<accession>L0TAI1</accession>
<accession>P64893</accession>
<accession>Q50609</accession>
<reference key="1">
    <citation type="journal article" date="1998" name="Nature">
        <title>Deciphering the biology of Mycobacterium tuberculosis from the complete genome sequence.</title>
        <authorList>
            <person name="Cole S.T."/>
            <person name="Brosch R."/>
            <person name="Parkhill J."/>
            <person name="Garnier T."/>
            <person name="Churcher C.M."/>
            <person name="Harris D.E."/>
            <person name="Gordon S.V."/>
            <person name="Eiglmeier K."/>
            <person name="Gas S."/>
            <person name="Barry C.E. III"/>
            <person name="Tekaia F."/>
            <person name="Badcock K."/>
            <person name="Basham D."/>
            <person name="Brown D."/>
            <person name="Chillingworth T."/>
            <person name="Connor R."/>
            <person name="Davies R.M."/>
            <person name="Devlin K."/>
            <person name="Feltwell T."/>
            <person name="Gentles S."/>
            <person name="Hamlin N."/>
            <person name="Holroyd S."/>
            <person name="Hornsby T."/>
            <person name="Jagels K."/>
            <person name="Krogh A."/>
            <person name="McLean J."/>
            <person name="Moule S."/>
            <person name="Murphy L.D."/>
            <person name="Oliver S."/>
            <person name="Osborne J."/>
            <person name="Quail M.A."/>
            <person name="Rajandream M.A."/>
            <person name="Rogers J."/>
            <person name="Rutter S."/>
            <person name="Seeger K."/>
            <person name="Skelton S."/>
            <person name="Squares S."/>
            <person name="Squares R."/>
            <person name="Sulston J.E."/>
            <person name="Taylor K."/>
            <person name="Whitehead S."/>
            <person name="Barrell B.G."/>
        </authorList>
    </citation>
    <scope>NUCLEOTIDE SEQUENCE [LARGE SCALE GENOMIC DNA]</scope>
    <source>
        <strain>ATCC 25618 / H37Rv</strain>
    </source>
</reference>